<comment type="function">
    <text evidence="1">Involved in transcription antitermination. Required for transcription of ribosomal RNA (rRNA) genes. Binds specifically to the boxA antiterminator sequence of the ribosomal RNA (rrn) operons.</text>
</comment>
<comment type="similarity">
    <text evidence="1">Belongs to the NusB family.</text>
</comment>
<reference key="1">
    <citation type="journal article" date="2003" name="Proc. Natl. Acad. Sci. U.S.A.">
        <title>The complete genome sequence of Mycobacterium bovis.</title>
        <authorList>
            <person name="Garnier T."/>
            <person name="Eiglmeier K."/>
            <person name="Camus J.-C."/>
            <person name="Medina N."/>
            <person name="Mansoor H."/>
            <person name="Pryor M."/>
            <person name="Duthoy S."/>
            <person name="Grondin S."/>
            <person name="Lacroix C."/>
            <person name="Monsempe C."/>
            <person name="Simon S."/>
            <person name="Harris B."/>
            <person name="Atkin R."/>
            <person name="Doggett J."/>
            <person name="Mayes R."/>
            <person name="Keating L."/>
            <person name="Wheeler P.R."/>
            <person name="Parkhill J."/>
            <person name="Barrell B.G."/>
            <person name="Cole S.T."/>
            <person name="Gordon S.V."/>
            <person name="Hewinson R.G."/>
        </authorList>
    </citation>
    <scope>NUCLEOTIDE SEQUENCE [LARGE SCALE GENOMIC DNA]</scope>
    <source>
        <strain>ATCC BAA-935 / AF2122/97</strain>
    </source>
</reference>
<reference key="2">
    <citation type="journal article" date="2017" name="Genome Announc.">
        <title>Updated reference genome sequence and annotation of Mycobacterium bovis AF2122/97.</title>
        <authorList>
            <person name="Malone K.M."/>
            <person name="Farrell D."/>
            <person name="Stuber T.P."/>
            <person name="Schubert O.T."/>
            <person name="Aebersold R."/>
            <person name="Robbe-Austerman S."/>
            <person name="Gordon S.V."/>
        </authorList>
    </citation>
    <scope>NUCLEOTIDE SEQUENCE [LARGE SCALE GENOMIC DNA]</scope>
    <scope>GENOME REANNOTATION</scope>
    <source>
        <strain>ATCC BAA-935 / AF2122/97</strain>
    </source>
</reference>
<feature type="chain" id="PRO_0000176555" description="Transcription antitermination protein NusB">
    <location>
        <begin position="1"/>
        <end position="156"/>
    </location>
</feature>
<evidence type="ECO:0000255" key="1">
    <source>
        <dbReference type="HAMAP-Rule" id="MF_00073"/>
    </source>
</evidence>
<dbReference type="EMBL" id="LT708304">
    <property type="protein sequence ID" value="SIU01179.1"/>
    <property type="molecule type" value="Genomic_DNA"/>
</dbReference>
<dbReference type="RefSeq" id="NP_856208.1">
    <property type="nucleotide sequence ID" value="NC_002945.3"/>
</dbReference>
<dbReference type="RefSeq" id="WP_003412985.1">
    <property type="nucleotide sequence ID" value="NC_002945.4"/>
</dbReference>
<dbReference type="SMR" id="Q7TYC8"/>
<dbReference type="GeneID" id="45426534"/>
<dbReference type="KEGG" id="mbo:BQ2027_MB2562C"/>
<dbReference type="PATRIC" id="fig|233413.5.peg.2819"/>
<dbReference type="Proteomes" id="UP000001419">
    <property type="component" value="Chromosome"/>
</dbReference>
<dbReference type="GO" id="GO:0005829">
    <property type="term" value="C:cytosol"/>
    <property type="evidence" value="ECO:0007669"/>
    <property type="project" value="TreeGrafter"/>
</dbReference>
<dbReference type="GO" id="GO:0003723">
    <property type="term" value="F:RNA binding"/>
    <property type="evidence" value="ECO:0007669"/>
    <property type="project" value="UniProtKB-UniRule"/>
</dbReference>
<dbReference type="GO" id="GO:0006353">
    <property type="term" value="P:DNA-templated transcription termination"/>
    <property type="evidence" value="ECO:0007669"/>
    <property type="project" value="UniProtKB-UniRule"/>
</dbReference>
<dbReference type="GO" id="GO:0031564">
    <property type="term" value="P:transcription antitermination"/>
    <property type="evidence" value="ECO:0007669"/>
    <property type="project" value="UniProtKB-KW"/>
</dbReference>
<dbReference type="CDD" id="cd00619">
    <property type="entry name" value="Terminator_NusB"/>
    <property type="match status" value="1"/>
</dbReference>
<dbReference type="Gene3D" id="1.10.940.10">
    <property type="entry name" value="NusB-like"/>
    <property type="match status" value="1"/>
</dbReference>
<dbReference type="HAMAP" id="MF_00073">
    <property type="entry name" value="NusB"/>
    <property type="match status" value="1"/>
</dbReference>
<dbReference type="InterPro" id="IPR035926">
    <property type="entry name" value="NusB-like_sf"/>
</dbReference>
<dbReference type="InterPro" id="IPR011605">
    <property type="entry name" value="NusB_fam"/>
</dbReference>
<dbReference type="InterPro" id="IPR006027">
    <property type="entry name" value="NusB_RsmB_TIM44"/>
</dbReference>
<dbReference type="NCBIfam" id="TIGR01951">
    <property type="entry name" value="nusB"/>
    <property type="match status" value="1"/>
</dbReference>
<dbReference type="PANTHER" id="PTHR11078:SF3">
    <property type="entry name" value="ANTITERMINATION NUSB DOMAIN-CONTAINING PROTEIN"/>
    <property type="match status" value="1"/>
</dbReference>
<dbReference type="PANTHER" id="PTHR11078">
    <property type="entry name" value="N UTILIZATION SUBSTANCE PROTEIN B-RELATED"/>
    <property type="match status" value="1"/>
</dbReference>
<dbReference type="Pfam" id="PF01029">
    <property type="entry name" value="NusB"/>
    <property type="match status" value="1"/>
</dbReference>
<dbReference type="SUPFAM" id="SSF48013">
    <property type="entry name" value="NusB-like"/>
    <property type="match status" value="1"/>
</dbReference>
<sequence length="156" mass="16784">MSDRKPVRGRHQARKRAVDLLFEAEVRGISAAEVVDTRAALAEAKPDIARLHPYTAAVARGVSEHAAHIDDLITAHLRGWTLDRLPAVDRAILRVSVWELLHAADVPEPVVVDEAVQLAKELSTDDSPGFVNGVLGQVMLVTPQLRAAAQAVRGGA</sequence>
<proteinExistence type="inferred from homology"/>
<accession>Q7TYC8</accession>
<accession>A0A1R3Y1H2</accession>
<accession>X2BL35</accession>
<protein>
    <recommendedName>
        <fullName evidence="1">Transcription antitermination protein NusB</fullName>
    </recommendedName>
    <alternativeName>
        <fullName evidence="1">Antitermination factor NusB</fullName>
    </alternativeName>
</protein>
<organism>
    <name type="scientific">Mycobacterium bovis (strain ATCC BAA-935 / AF2122/97)</name>
    <dbReference type="NCBI Taxonomy" id="233413"/>
    <lineage>
        <taxon>Bacteria</taxon>
        <taxon>Bacillati</taxon>
        <taxon>Actinomycetota</taxon>
        <taxon>Actinomycetes</taxon>
        <taxon>Mycobacteriales</taxon>
        <taxon>Mycobacteriaceae</taxon>
        <taxon>Mycobacterium</taxon>
        <taxon>Mycobacterium tuberculosis complex</taxon>
    </lineage>
</organism>
<keyword id="KW-1185">Reference proteome</keyword>
<keyword id="KW-0694">RNA-binding</keyword>
<keyword id="KW-0804">Transcription</keyword>
<keyword id="KW-0889">Transcription antitermination</keyword>
<keyword id="KW-0805">Transcription regulation</keyword>
<gene>
    <name evidence="1" type="primary">nusB</name>
    <name type="ordered locus">BQ2027_MB2562C</name>
</gene>
<name>NUSB_MYCBO</name>